<feature type="chain" id="PRO_1000149553" description="Ribosome rescue factor SmrB">
    <location>
        <begin position="1"/>
        <end position="186"/>
    </location>
</feature>
<feature type="domain" description="Smr" evidence="1">
    <location>
        <begin position="99"/>
        <end position="174"/>
    </location>
</feature>
<proteinExistence type="inferred from homology"/>
<dbReference type="EC" id="3.1.-.-" evidence="1"/>
<dbReference type="EMBL" id="CP001158">
    <property type="protein sequence ID" value="ACL29919.1"/>
    <property type="molecule type" value="Genomic_DNA"/>
</dbReference>
<dbReference type="RefSeq" id="WP_012619427.1">
    <property type="nucleotide sequence ID" value="NC_011834.1"/>
</dbReference>
<dbReference type="SMR" id="B8D704"/>
<dbReference type="KEGG" id="bau:BUAPTUC7_097"/>
<dbReference type="HOGENOM" id="CLU_055978_4_0_6"/>
<dbReference type="GO" id="GO:0004521">
    <property type="term" value="F:RNA endonuclease activity"/>
    <property type="evidence" value="ECO:0007669"/>
    <property type="project" value="UniProtKB-UniRule"/>
</dbReference>
<dbReference type="GO" id="GO:0019843">
    <property type="term" value="F:rRNA binding"/>
    <property type="evidence" value="ECO:0007669"/>
    <property type="project" value="UniProtKB-UniRule"/>
</dbReference>
<dbReference type="GO" id="GO:0072344">
    <property type="term" value="P:rescue of stalled ribosome"/>
    <property type="evidence" value="ECO:0007669"/>
    <property type="project" value="UniProtKB-UniRule"/>
</dbReference>
<dbReference type="Gene3D" id="3.30.1370.110">
    <property type="match status" value="1"/>
</dbReference>
<dbReference type="HAMAP" id="MF_01042">
    <property type="entry name" value="SmrB"/>
    <property type="match status" value="1"/>
</dbReference>
<dbReference type="InterPro" id="IPR002625">
    <property type="entry name" value="Smr_dom"/>
</dbReference>
<dbReference type="InterPro" id="IPR036063">
    <property type="entry name" value="Smr_dom_sf"/>
</dbReference>
<dbReference type="InterPro" id="IPR022990">
    <property type="entry name" value="SmrB-like"/>
</dbReference>
<dbReference type="NCBIfam" id="NF003432">
    <property type="entry name" value="PRK04946.1"/>
    <property type="match status" value="1"/>
</dbReference>
<dbReference type="PANTHER" id="PTHR35562">
    <property type="entry name" value="DNA ENDONUCLEASE SMRA-RELATED"/>
    <property type="match status" value="1"/>
</dbReference>
<dbReference type="PANTHER" id="PTHR35562:SF1">
    <property type="entry name" value="UPF0115 PROTEIN YFCN"/>
    <property type="match status" value="1"/>
</dbReference>
<dbReference type="Pfam" id="PF01713">
    <property type="entry name" value="Smr"/>
    <property type="match status" value="1"/>
</dbReference>
<dbReference type="SMART" id="SM00463">
    <property type="entry name" value="SMR"/>
    <property type="match status" value="1"/>
</dbReference>
<dbReference type="SUPFAM" id="SSF160443">
    <property type="entry name" value="SMR domain-like"/>
    <property type="match status" value="1"/>
</dbReference>
<dbReference type="PROSITE" id="PS50828">
    <property type="entry name" value="SMR"/>
    <property type="match status" value="1"/>
</dbReference>
<evidence type="ECO:0000255" key="1">
    <source>
        <dbReference type="HAMAP-Rule" id="MF_01042"/>
    </source>
</evidence>
<accession>B8D704</accession>
<reference key="1">
    <citation type="journal article" date="2009" name="Science">
        <title>The dynamics and time scale of ongoing genomic erosion in symbiotic bacteria.</title>
        <authorList>
            <person name="Moran N.A."/>
            <person name="McLaughlin H.J."/>
            <person name="Sorek R."/>
        </authorList>
    </citation>
    <scope>NUCLEOTIDE SEQUENCE [LARGE SCALE GENOMIC DNA]</scope>
    <source>
        <strain>Tuc7</strain>
    </source>
</reference>
<organism>
    <name type="scientific">Buchnera aphidicola subsp. Acyrthosiphon pisum (strain Tuc7)</name>
    <dbReference type="NCBI Taxonomy" id="561501"/>
    <lineage>
        <taxon>Bacteria</taxon>
        <taxon>Pseudomonadati</taxon>
        <taxon>Pseudomonadota</taxon>
        <taxon>Gammaproteobacteria</taxon>
        <taxon>Enterobacterales</taxon>
        <taxon>Erwiniaceae</taxon>
        <taxon>Buchnera</taxon>
    </lineage>
</organism>
<comment type="function">
    <text evidence="1">Acts as a ribosome collision sensor. Detects stalled/collided disomes (pairs of ribosomes where the leading ribosome is stalled and a second ribosome has collided with it) and endonucleolytically cleaves mRNA at the 5' boundary of the stalled ribosome. Stalled/collided disomes form a new interface (primarily via the 30S subunits) that binds SmrB. Cleaved mRNA becomes available for tmRNA ligation, leading to ribosomal subunit dissociation and rescue of stalled ribosomes.</text>
</comment>
<comment type="subunit">
    <text evidence="1">Associates with collided ribosomes, but not with correctly translating polysomes.</text>
</comment>
<comment type="similarity">
    <text evidence="1">Belongs to the SmrB family.</text>
</comment>
<name>SMRB_BUCAT</name>
<keyword id="KW-0255">Endonuclease</keyword>
<keyword id="KW-0378">Hydrolase</keyword>
<keyword id="KW-0540">Nuclease</keyword>
<keyword id="KW-0694">RNA-binding</keyword>
<keyword id="KW-0699">rRNA-binding</keyword>
<protein>
    <recommendedName>
        <fullName evidence="1">Ribosome rescue factor SmrB</fullName>
        <ecNumber evidence="1">3.1.-.-</ecNumber>
    </recommendedName>
</protein>
<sequence length="186" mass="21913">MDKNSRYTVDSSILFRQWLNDTREMVQDTIFHSRIQKKNNNHLVSQRVFFEQNAHSHYFSYRNNKNLFKENPVSYIRHQSLYNVLKNLKKGRYNPDISIDLHGLTQHQAQQALGELITTCQKEKIFCAHIMHGHGKHILKKQTPFWLSQHPDIIAFHEAPKFFGSDAAIIVIIEINSLKKNINIFN</sequence>
<gene>
    <name evidence="1" type="primary">smrB</name>
    <name type="ordered locus">BUAPTUC7_097</name>
</gene>